<reference key="1">
    <citation type="submission" date="2008-10" db="EMBL/GenBank/DDBJ databases">
        <title>Genome sequence of Bacillus cereus AH820.</title>
        <authorList>
            <person name="Dodson R.J."/>
            <person name="Durkin A.S."/>
            <person name="Rosovitz M.J."/>
            <person name="Rasko D.A."/>
            <person name="Hoffmaster A."/>
            <person name="Ravel J."/>
            <person name="Sutton G."/>
        </authorList>
    </citation>
    <scope>NUCLEOTIDE SEQUENCE [LARGE SCALE GENOMIC DNA]</scope>
    <source>
        <strain>AH820</strain>
    </source>
</reference>
<proteinExistence type="inferred from homology"/>
<accession>B7JE92</accession>
<name>DABA_BACC0</name>
<sequence length="874" mass="99225">MSIPSILRKETLKKKDKNIDLQENNINDLVVSASRVIAPLWPISTFAAHHPWMGLEKQSFEQVANWLKEARNVDIYPSASMIHSAKAKGEIEESFLQIALSRWLDSQSFHMPRETAERFCQEALKLERLPSSLLSSPELNKLAEEINYVNTGSMKDSSMQPISSLIENQNGDNLSDILNYHIIKWCKLYLDDAGTSWAMPNREKGFYRAWQHLITFDPALSKTERKVLKDWPEDALIALTKALSELGISESNMQAYLEGHLLSLPGWAGMIRWRSQQSIEEQELLIEYLAVRLSMELAIVKPYLPLKNQKAEKKVSIVPLIASWIYWGDISIEKWLQMSATEQSELLAFAYRFDENTRKKLWLEAWEQTHAEQLREKIASKQRATNDKKRVVAQLAFCIDVRSEPFRRHLEKLGPFETFGIAGFFGLPIATTELGSNDSHPSLPVILKPKHQIKELTDENECKSYEQRKMVGSSVRYTFKTMKQNVLTSMLLPEVSGPLLGLQMVTRSFVPRRVGGFIRNLRKNMLQKPDTTFSLNHVHDTNCEIPIGFTKEEKVNYVRQALKMVGLTEGFAPLVVMCGHSSQSTNNPYAAALECGACGGAAGGFNARVFATLCNLPEVREALSAEGIKIPDDTIFAAAEHKTTVDELEWIYVPELSEIAQEAFDCIEAIMPNVSQHANRERLMQLPHFKTKIKNPSKEAHRFAEDWSEIRPEWGLARNASFIIGQRELTQECDLEGRAFLHNYDWKQDESGDILANIIAGPGTVAQWINLQYYASTVAPHYYGSGNKATQTVTAGLGVMQGNASDLLPGLPWQSVMQSDRETYHSPLRLLIVIQAPTKYIERLLNNNFTFREKVQNGWVRLASVDPEGRWKNW</sequence>
<feature type="chain" id="PRO_0000387239" description="Probable inorganic carbon transporter subunit DabA">
    <location>
        <begin position="1"/>
        <end position="874"/>
    </location>
</feature>
<feature type="binding site" evidence="1">
    <location>
        <position position="398"/>
    </location>
    <ligand>
        <name>Zn(2+)</name>
        <dbReference type="ChEBI" id="CHEBI:29105"/>
    </ligand>
</feature>
<feature type="binding site" evidence="1">
    <location>
        <position position="400"/>
    </location>
    <ligand>
        <name>Zn(2+)</name>
        <dbReference type="ChEBI" id="CHEBI:29105"/>
    </ligand>
</feature>
<feature type="binding site" evidence="1">
    <location>
        <position position="580"/>
    </location>
    <ligand>
        <name>Zn(2+)</name>
        <dbReference type="ChEBI" id="CHEBI:29105"/>
    </ligand>
</feature>
<feature type="binding site" evidence="1">
    <location>
        <position position="595"/>
    </location>
    <ligand>
        <name>Zn(2+)</name>
        <dbReference type="ChEBI" id="CHEBI:29105"/>
    </ligand>
</feature>
<organism>
    <name type="scientific">Bacillus cereus (strain AH820)</name>
    <dbReference type="NCBI Taxonomy" id="405535"/>
    <lineage>
        <taxon>Bacteria</taxon>
        <taxon>Bacillati</taxon>
        <taxon>Bacillota</taxon>
        <taxon>Bacilli</taxon>
        <taxon>Bacillales</taxon>
        <taxon>Bacillaceae</taxon>
        <taxon>Bacillus</taxon>
        <taxon>Bacillus cereus group</taxon>
    </lineage>
</organism>
<gene>
    <name evidence="1" type="primary">dabA</name>
    <name type="ordered locus">BCAH820_3189</name>
</gene>
<evidence type="ECO:0000255" key="1">
    <source>
        <dbReference type="HAMAP-Rule" id="MF_01871"/>
    </source>
</evidence>
<dbReference type="EMBL" id="CP001283">
    <property type="protein sequence ID" value="ACK88589.1"/>
    <property type="molecule type" value="Genomic_DNA"/>
</dbReference>
<dbReference type="RefSeq" id="WP_000026989.1">
    <property type="nucleotide sequence ID" value="NC_011773.1"/>
</dbReference>
<dbReference type="SMR" id="B7JE92"/>
<dbReference type="KEGG" id="bcu:BCAH820_3189"/>
<dbReference type="HOGENOM" id="CLU_009885_0_0_9"/>
<dbReference type="Proteomes" id="UP000001363">
    <property type="component" value="Chromosome"/>
</dbReference>
<dbReference type="GO" id="GO:0005886">
    <property type="term" value="C:plasma membrane"/>
    <property type="evidence" value="ECO:0007669"/>
    <property type="project" value="UniProtKB-SubCell"/>
</dbReference>
<dbReference type="GO" id="GO:0008270">
    <property type="term" value="F:zinc ion binding"/>
    <property type="evidence" value="ECO:0007669"/>
    <property type="project" value="UniProtKB-UniRule"/>
</dbReference>
<dbReference type="HAMAP" id="MF_01871">
    <property type="entry name" value="DabA"/>
    <property type="match status" value="1"/>
</dbReference>
<dbReference type="InterPro" id="IPR018752">
    <property type="entry name" value="DabA"/>
</dbReference>
<dbReference type="PANTHER" id="PTHR38344:SF1">
    <property type="entry name" value="INORGANIC CARBON TRANSPORTER SUBUNIT DABA-RELATED"/>
    <property type="match status" value="1"/>
</dbReference>
<dbReference type="PANTHER" id="PTHR38344">
    <property type="entry name" value="UPF0753 PROTEIN AQ_863"/>
    <property type="match status" value="1"/>
</dbReference>
<dbReference type="Pfam" id="PF10070">
    <property type="entry name" value="DabA"/>
    <property type="match status" value="1"/>
</dbReference>
<comment type="function">
    <text evidence="1">Part of an energy-coupled inorganic carbon pump.</text>
</comment>
<comment type="cofactor">
    <cofactor evidence="1">
        <name>Zn(2+)</name>
        <dbReference type="ChEBI" id="CHEBI:29105"/>
    </cofactor>
</comment>
<comment type="subunit">
    <text evidence="1">Forms a complex with DabB.</text>
</comment>
<comment type="subcellular location">
    <subcellularLocation>
        <location evidence="1">Cell membrane</location>
        <topology evidence="1">Peripheral membrane protein</topology>
    </subcellularLocation>
</comment>
<comment type="similarity">
    <text evidence="1">Belongs to the inorganic carbon transporter (TC 9.A.2) DabA family.</text>
</comment>
<protein>
    <recommendedName>
        <fullName evidence="1">Probable inorganic carbon transporter subunit DabA</fullName>
    </recommendedName>
</protein>
<keyword id="KW-1003">Cell membrane</keyword>
<keyword id="KW-0472">Membrane</keyword>
<keyword id="KW-0479">Metal-binding</keyword>
<keyword id="KW-0813">Transport</keyword>
<keyword id="KW-0862">Zinc</keyword>